<gene>
    <name evidence="1" type="primary">galT</name>
</gene>
<reference key="1">
    <citation type="journal article" date="1998" name="Appl. Environ. Microbiol.">
        <title>The gal genes for the Leloir pathway of Lactobacillus casei 64H.</title>
        <authorList>
            <person name="Bettenbrock K."/>
            <person name="Alpert C.-A."/>
        </authorList>
    </citation>
    <scope>NUCLEOTIDE SEQUENCE [GENOMIC DNA]</scope>
    <source>
        <strain>64H</strain>
    </source>
</reference>
<sequence>MTAISNHVGTIVKLNPDYTQMDAVYLTNKLLNLIGDAALDLPGDADPLTNLDLMVKAAQENGKIPDSQAARQILEAQLMDLATPTPSRINQLFWDKYQAGPRVATDWFFALSRANNYIQTRAIAKNVVFPAKTEYGDLEITINLSKPEKDPKDIAAAAHAAQSGYPACALCLQTEGYAGRTDFAARTNHRIIRFLLGGKTWGFQYSPYAYFNEHAIFLDAIHEPMVIDQSTFSNLLSIVSMFPTYFVGSNADLPIVGGSMLTHEHYQGGRHTFPMAKAPIETQVEISGHPHVFAGIVKWPMSVIRLVSADSDELINAAEHVRQVWNQYTDETVDVRAFVDGKPHHTVTPIARRVGSEFQLDLVLRDNQTSAEHPDGIFHPHQDVQHIKKENIGLIEVMGRAILPARLKSELAEVQKYLLGEANTMKPMHKTWADQLKAKYDWTPENVEAQMQAAVGRVFARVLEDAGVFKRDEVGQKAFARFCRAL</sequence>
<accession>O84904</accession>
<feature type="chain" id="PRO_0000169906" description="Galactose-1-phosphate uridylyltransferase">
    <location>
        <begin position="1"/>
        <end position="486"/>
    </location>
</feature>
<protein>
    <recommendedName>
        <fullName evidence="1">Galactose-1-phosphate uridylyltransferase</fullName>
        <shortName evidence="1">Gal-1-P uridylyltransferase</shortName>
        <ecNumber evidence="1">2.7.7.12</ecNumber>
    </recommendedName>
    <alternativeName>
        <fullName evidence="1">UDP-glucose--hexose-1-phosphate uridylyltransferase</fullName>
    </alternativeName>
</protein>
<keyword id="KW-0119">Carbohydrate metabolism</keyword>
<keyword id="KW-0963">Cytoplasm</keyword>
<keyword id="KW-0299">Galactose metabolism</keyword>
<keyword id="KW-0548">Nucleotidyltransferase</keyword>
<keyword id="KW-0808">Transferase</keyword>
<evidence type="ECO:0000255" key="1">
    <source>
        <dbReference type="HAMAP-Rule" id="MF_00571"/>
    </source>
</evidence>
<proteinExistence type="inferred from homology"/>
<dbReference type="EC" id="2.7.7.12" evidence="1"/>
<dbReference type="EMBL" id="AF005933">
    <property type="protein sequence ID" value="AAC19330.1"/>
    <property type="molecule type" value="Genomic_DNA"/>
</dbReference>
<dbReference type="STRING" id="1582.AAW28_10635"/>
<dbReference type="eggNOG" id="COG4468">
    <property type="taxonomic scope" value="Bacteria"/>
</dbReference>
<dbReference type="UniPathway" id="UPA00214"/>
<dbReference type="GO" id="GO:0005737">
    <property type="term" value="C:cytoplasm"/>
    <property type="evidence" value="ECO:0007669"/>
    <property type="project" value="UniProtKB-SubCell"/>
</dbReference>
<dbReference type="GO" id="GO:0008108">
    <property type="term" value="F:UDP-glucose:hexose-1-phosphate uridylyltransferase activity"/>
    <property type="evidence" value="ECO:0007669"/>
    <property type="project" value="UniProtKB-UniRule"/>
</dbReference>
<dbReference type="GO" id="GO:0006012">
    <property type="term" value="P:galactose metabolic process"/>
    <property type="evidence" value="ECO:0007669"/>
    <property type="project" value="UniProtKB-UniRule"/>
</dbReference>
<dbReference type="HAMAP" id="MF_00571">
    <property type="entry name" value="GalP_UDP_trans"/>
    <property type="match status" value="1"/>
</dbReference>
<dbReference type="InterPro" id="IPR000766">
    <property type="entry name" value="GalP_uridyl_Trfase_II"/>
</dbReference>
<dbReference type="InterPro" id="IPR023425">
    <property type="entry name" value="GalP_uridyl_Trfase_II_CS"/>
</dbReference>
<dbReference type="InterPro" id="IPR005850">
    <property type="entry name" value="GalP_Utransf_C"/>
</dbReference>
<dbReference type="InterPro" id="IPR005849">
    <property type="entry name" value="GalP_Utransf_N"/>
</dbReference>
<dbReference type="NCBIfam" id="TIGR01239">
    <property type="entry name" value="galT_2"/>
    <property type="match status" value="1"/>
</dbReference>
<dbReference type="NCBIfam" id="NF003630">
    <property type="entry name" value="PRK05270.1-3"/>
    <property type="match status" value="1"/>
</dbReference>
<dbReference type="NCBIfam" id="NF003633">
    <property type="entry name" value="PRK05270.2-2"/>
    <property type="match status" value="1"/>
</dbReference>
<dbReference type="PANTHER" id="PTHR39191:SF1">
    <property type="entry name" value="DUF4922 DOMAIN-CONTAINING PROTEIN"/>
    <property type="match status" value="1"/>
</dbReference>
<dbReference type="PANTHER" id="PTHR39191">
    <property type="entry name" value="GALACTOSE-1-PHOSPHATE URIDYLYLTRANSFERASE"/>
    <property type="match status" value="1"/>
</dbReference>
<dbReference type="Pfam" id="PF02744">
    <property type="entry name" value="GalP_UDP_tr_C"/>
    <property type="match status" value="1"/>
</dbReference>
<dbReference type="Pfam" id="PF01087">
    <property type="entry name" value="GalP_UDP_transf"/>
    <property type="match status" value="1"/>
</dbReference>
<dbReference type="PIRSF" id="PIRSF006005">
    <property type="entry name" value="GalT_BS"/>
    <property type="match status" value="1"/>
</dbReference>
<dbReference type="PROSITE" id="PS01163">
    <property type="entry name" value="GAL_P_UDP_TRANSF_II"/>
    <property type="match status" value="1"/>
</dbReference>
<organism>
    <name type="scientific">Lacticaseibacillus casei</name>
    <name type="common">Lactobacillus casei</name>
    <dbReference type="NCBI Taxonomy" id="1582"/>
    <lineage>
        <taxon>Bacteria</taxon>
        <taxon>Bacillati</taxon>
        <taxon>Bacillota</taxon>
        <taxon>Bacilli</taxon>
        <taxon>Lactobacillales</taxon>
        <taxon>Lactobacillaceae</taxon>
        <taxon>Lacticaseibacillus</taxon>
    </lineage>
</organism>
<name>GALT_LACCA</name>
<comment type="catalytic activity">
    <reaction evidence="1">
        <text>alpha-D-galactose 1-phosphate + UDP-alpha-D-glucose = alpha-D-glucose 1-phosphate + UDP-alpha-D-galactose</text>
        <dbReference type="Rhea" id="RHEA:13989"/>
        <dbReference type="ChEBI" id="CHEBI:58336"/>
        <dbReference type="ChEBI" id="CHEBI:58601"/>
        <dbReference type="ChEBI" id="CHEBI:58885"/>
        <dbReference type="ChEBI" id="CHEBI:66914"/>
        <dbReference type="EC" id="2.7.7.12"/>
    </reaction>
</comment>
<comment type="pathway">
    <text evidence="1">Carbohydrate metabolism; galactose metabolism.</text>
</comment>
<comment type="subcellular location">
    <subcellularLocation>
        <location evidence="1">Cytoplasm</location>
    </subcellularLocation>
</comment>
<comment type="similarity">
    <text evidence="1">Belongs to the galactose-1-phosphate uridylyltransferase type 2 family.</text>
</comment>